<sequence>MEAAAAIAPQRAWGKGRLVAKTGGARTRIAGLYQEGCAKIRLPRTFDASMEAVLINSSGGVTGGDRLAWEFEAGEGTNLTLTTQACEKVYKASVDTAVVATRISVAARGHVDWLPQESILFDRSALSRSLEVDLAPDASFLALEAVLIGRKAMGETVRSGLFRDHWRIRSGGALVHAENLALAGDIAALGSRRAVLDGAVAFATLVYVAPDCEALLPRLRTSLAEHALSGVSHFAVNGRDKIVARVVAADGFALRKILIPLISHLRKGASVPRVWTL</sequence>
<feature type="chain" id="PRO_0000340518" description="Urease accessory protein UreD">
    <location>
        <begin position="1"/>
        <end position="277"/>
    </location>
</feature>
<evidence type="ECO:0000255" key="1">
    <source>
        <dbReference type="HAMAP-Rule" id="MF_01384"/>
    </source>
</evidence>
<comment type="function">
    <text evidence="1">Required for maturation of urease via the functional incorporation of the urease nickel metallocenter.</text>
</comment>
<comment type="subunit">
    <text evidence="1">UreD, UreF and UreG form a complex that acts as a GTP-hydrolysis-dependent molecular chaperone, activating the urease apoprotein by helping to assemble the nickel containing metallocenter of UreC. The UreE protein probably delivers the nickel.</text>
</comment>
<comment type="subcellular location">
    <subcellularLocation>
        <location evidence="1">Cytoplasm</location>
    </subcellularLocation>
</comment>
<comment type="similarity">
    <text evidence="1">Belongs to the UreD family.</text>
</comment>
<dbReference type="EMBL" id="CP000738">
    <property type="protein sequence ID" value="ABR61221.1"/>
    <property type="molecule type" value="Genomic_DNA"/>
</dbReference>
<dbReference type="RefSeq" id="WP_012066612.1">
    <property type="nucleotide sequence ID" value="NC_009636.1"/>
</dbReference>
<dbReference type="RefSeq" id="YP_001328056.1">
    <property type="nucleotide sequence ID" value="NC_009636.1"/>
</dbReference>
<dbReference type="SMR" id="A6UC41"/>
<dbReference type="STRING" id="366394.Smed_2389"/>
<dbReference type="GeneID" id="61611371"/>
<dbReference type="KEGG" id="smd:Smed_2389"/>
<dbReference type="PATRIC" id="fig|366394.8.peg.5572"/>
<dbReference type="eggNOG" id="COG0829">
    <property type="taxonomic scope" value="Bacteria"/>
</dbReference>
<dbReference type="HOGENOM" id="CLU_056339_2_0_5"/>
<dbReference type="OrthoDB" id="9798842at2"/>
<dbReference type="Proteomes" id="UP000001108">
    <property type="component" value="Chromosome"/>
</dbReference>
<dbReference type="GO" id="GO:0005737">
    <property type="term" value="C:cytoplasm"/>
    <property type="evidence" value="ECO:0007669"/>
    <property type="project" value="UniProtKB-SubCell"/>
</dbReference>
<dbReference type="GO" id="GO:0016151">
    <property type="term" value="F:nickel cation binding"/>
    <property type="evidence" value="ECO:0007669"/>
    <property type="project" value="UniProtKB-UniRule"/>
</dbReference>
<dbReference type="HAMAP" id="MF_01384">
    <property type="entry name" value="UreD"/>
    <property type="match status" value="1"/>
</dbReference>
<dbReference type="InterPro" id="IPR002669">
    <property type="entry name" value="UreD"/>
</dbReference>
<dbReference type="PANTHER" id="PTHR33643">
    <property type="entry name" value="UREASE ACCESSORY PROTEIN D"/>
    <property type="match status" value="1"/>
</dbReference>
<dbReference type="PANTHER" id="PTHR33643:SF1">
    <property type="entry name" value="UREASE ACCESSORY PROTEIN D"/>
    <property type="match status" value="1"/>
</dbReference>
<dbReference type="Pfam" id="PF01774">
    <property type="entry name" value="UreD"/>
    <property type="match status" value="1"/>
</dbReference>
<accession>A6UC41</accession>
<reference key="1">
    <citation type="submission" date="2007-06" db="EMBL/GenBank/DDBJ databases">
        <title>Complete sequence of Sinorhizobium medicae WSM419 chromosome.</title>
        <authorList>
            <consortium name="US DOE Joint Genome Institute"/>
            <person name="Copeland A."/>
            <person name="Lucas S."/>
            <person name="Lapidus A."/>
            <person name="Barry K."/>
            <person name="Glavina del Rio T."/>
            <person name="Dalin E."/>
            <person name="Tice H."/>
            <person name="Pitluck S."/>
            <person name="Chain P."/>
            <person name="Malfatti S."/>
            <person name="Shin M."/>
            <person name="Vergez L."/>
            <person name="Schmutz J."/>
            <person name="Larimer F."/>
            <person name="Land M."/>
            <person name="Hauser L."/>
            <person name="Kyrpides N."/>
            <person name="Mikhailova N."/>
            <person name="Reeve W.G."/>
            <person name="Richardson P."/>
        </authorList>
    </citation>
    <scope>NUCLEOTIDE SEQUENCE [LARGE SCALE GENOMIC DNA]</scope>
    <source>
        <strain>WSM419</strain>
    </source>
</reference>
<keyword id="KW-0143">Chaperone</keyword>
<keyword id="KW-0963">Cytoplasm</keyword>
<keyword id="KW-0996">Nickel insertion</keyword>
<organism>
    <name type="scientific">Sinorhizobium medicae (strain WSM419)</name>
    <name type="common">Ensifer medicae</name>
    <dbReference type="NCBI Taxonomy" id="366394"/>
    <lineage>
        <taxon>Bacteria</taxon>
        <taxon>Pseudomonadati</taxon>
        <taxon>Pseudomonadota</taxon>
        <taxon>Alphaproteobacteria</taxon>
        <taxon>Hyphomicrobiales</taxon>
        <taxon>Rhizobiaceae</taxon>
        <taxon>Sinorhizobium/Ensifer group</taxon>
        <taxon>Sinorhizobium</taxon>
    </lineage>
</organism>
<proteinExistence type="inferred from homology"/>
<name>URED_SINMW</name>
<protein>
    <recommendedName>
        <fullName evidence="1">Urease accessory protein UreD</fullName>
    </recommendedName>
</protein>
<gene>
    <name evidence="1" type="primary">ureD</name>
    <name type="ordered locus">Smed_2389</name>
</gene>